<protein>
    <recommendedName>
        <fullName evidence="1">Light-independent protochlorophyllide reductase subunit N</fullName>
        <shortName evidence="1">DPOR subunit N</shortName>
        <shortName evidence="1">LI-POR subunit N</shortName>
        <ecNumber evidence="1">1.3.7.7</ecNumber>
    </recommendedName>
</protein>
<geneLocation type="chloroplast"/>
<feature type="chain" id="PRO_0000208618" description="Light-independent protochlorophyllide reductase subunit N">
    <location>
        <begin position="1"/>
        <end position="459"/>
    </location>
</feature>
<feature type="binding site" evidence="1">
    <location>
        <position position="22"/>
    </location>
    <ligand>
        <name>[4Fe-4S] cluster</name>
        <dbReference type="ChEBI" id="CHEBI:49883"/>
        <note>ligand shared with heterodimeric partner</note>
    </ligand>
</feature>
<feature type="binding site" evidence="1">
    <location>
        <position position="47"/>
    </location>
    <ligand>
        <name>[4Fe-4S] cluster</name>
        <dbReference type="ChEBI" id="CHEBI:49883"/>
        <note>ligand shared with heterodimeric partner</note>
    </ligand>
</feature>
<feature type="binding site" evidence="1">
    <location>
        <position position="107"/>
    </location>
    <ligand>
        <name>[4Fe-4S] cluster</name>
        <dbReference type="ChEBI" id="CHEBI:49883"/>
        <note>ligand shared with heterodimeric partner</note>
    </ligand>
</feature>
<sequence length="459" mass="52122">MSTKIVETITLECETGNYHSFCPISCVSWLYQKIEDSFFLVVGTKTCGYFLQNALGVMIFAEPRYAMAELEEGDISAHLNDYEELKTLCIRIRKDRDPSVIIWIGTCTTEIIKMDLEGMAPKLEYEIGVPILVARANGLDYAFTQGEDTVLAVMAHRCPDQEFPIGESKETKKKLFPFPLLKENNLVEYANHPPLVIFGSLPSNLVSQLDTELRRQFIKVSGWLPAQRYADLPSLGDGVYVCGVNPFLSRTATTLIRRKKCELIVAPFPIGPDGTRAWIERICPVFGIEAQSLEEIEERIWESLKDYLDLVRGKSVFFMGDNLIEISIARFLIRCGMIVYEIGIPYLDKRYQAAELALLKKTCIRMCMPIPRIVEKPDNSNQIRRMRELKPDLAITGMAHANPLGARGIGTKWSVEFTFAQIHGFANARDVLELVTRPLRRNENLDNLDRTTLVRKNNK</sequence>
<proteinExistence type="inferred from homology"/>
<gene>
    <name evidence="1" type="primary">chlN</name>
    <name type="synonym">gidA</name>
</gene>
<keyword id="KW-0004">4Fe-4S</keyword>
<keyword id="KW-0067">ATP-binding</keyword>
<keyword id="KW-0149">Chlorophyll biosynthesis</keyword>
<keyword id="KW-0150">Chloroplast</keyword>
<keyword id="KW-0408">Iron</keyword>
<keyword id="KW-0411">Iron-sulfur</keyword>
<keyword id="KW-0479">Metal-binding</keyword>
<keyword id="KW-0547">Nucleotide-binding</keyword>
<keyword id="KW-0560">Oxidoreductase</keyword>
<keyword id="KW-0602">Photosynthesis</keyword>
<keyword id="KW-0934">Plastid</keyword>
<accession>P26180</accession>
<dbReference type="EC" id="1.3.7.7" evidence="1"/>
<dbReference type="EMBL" id="X56200">
    <property type="protein sequence ID" value="CAA39660.1"/>
    <property type="molecule type" value="Genomic_DNA"/>
</dbReference>
<dbReference type="PIR" id="S17742">
    <property type="entry name" value="S17742"/>
</dbReference>
<dbReference type="SMR" id="P26180"/>
<dbReference type="UniPathway" id="UPA00670"/>
<dbReference type="GO" id="GO:0009507">
    <property type="term" value="C:chloroplast"/>
    <property type="evidence" value="ECO:0007669"/>
    <property type="project" value="UniProtKB-SubCell"/>
</dbReference>
<dbReference type="GO" id="GO:0051539">
    <property type="term" value="F:4 iron, 4 sulfur cluster binding"/>
    <property type="evidence" value="ECO:0007669"/>
    <property type="project" value="UniProtKB-UniRule"/>
</dbReference>
<dbReference type="GO" id="GO:0005524">
    <property type="term" value="F:ATP binding"/>
    <property type="evidence" value="ECO:0007669"/>
    <property type="project" value="UniProtKB-UniRule"/>
</dbReference>
<dbReference type="GO" id="GO:0046872">
    <property type="term" value="F:metal ion binding"/>
    <property type="evidence" value="ECO:0007669"/>
    <property type="project" value="UniProtKB-KW"/>
</dbReference>
<dbReference type="GO" id="GO:0016730">
    <property type="term" value="F:oxidoreductase activity, acting on iron-sulfur proteins as donors"/>
    <property type="evidence" value="ECO:0007669"/>
    <property type="project" value="InterPro"/>
</dbReference>
<dbReference type="GO" id="GO:0016636">
    <property type="term" value="F:oxidoreductase activity, acting on the CH-CH group of donors, iron-sulfur protein as acceptor"/>
    <property type="evidence" value="ECO:0007669"/>
    <property type="project" value="UniProtKB-UniRule"/>
</dbReference>
<dbReference type="GO" id="GO:0036068">
    <property type="term" value="P:light-independent chlorophyll biosynthetic process"/>
    <property type="evidence" value="ECO:0007669"/>
    <property type="project" value="UniProtKB-UniRule"/>
</dbReference>
<dbReference type="GO" id="GO:0019685">
    <property type="term" value="P:photosynthesis, dark reaction"/>
    <property type="evidence" value="ECO:0007669"/>
    <property type="project" value="InterPro"/>
</dbReference>
<dbReference type="CDD" id="cd01979">
    <property type="entry name" value="Pchlide_reductase_N"/>
    <property type="match status" value="1"/>
</dbReference>
<dbReference type="Gene3D" id="3.40.50.1980">
    <property type="entry name" value="Nitrogenase molybdenum iron protein domain"/>
    <property type="match status" value="3"/>
</dbReference>
<dbReference type="HAMAP" id="MF_00352">
    <property type="entry name" value="ChlN_BchN"/>
    <property type="match status" value="1"/>
</dbReference>
<dbReference type="InterPro" id="IPR050293">
    <property type="entry name" value="LIPOR_BchN/ChlN"/>
</dbReference>
<dbReference type="InterPro" id="IPR000510">
    <property type="entry name" value="Nase/OxRdtase_comp1"/>
</dbReference>
<dbReference type="InterPro" id="IPR005970">
    <property type="entry name" value="Protochl_reductN"/>
</dbReference>
<dbReference type="NCBIfam" id="TIGR01279">
    <property type="entry name" value="DPOR_bchN"/>
    <property type="match status" value="1"/>
</dbReference>
<dbReference type="NCBIfam" id="NF002768">
    <property type="entry name" value="PRK02842.1"/>
    <property type="match status" value="1"/>
</dbReference>
<dbReference type="PANTHER" id="PTHR39429">
    <property type="entry name" value="LIGHT-INDEPENDENT PROTOCHLOROPHYLLIDE REDUCTASE SUBUNIT N"/>
    <property type="match status" value="1"/>
</dbReference>
<dbReference type="PANTHER" id="PTHR39429:SF3">
    <property type="entry name" value="LIGHT-INDEPENDENT PROTOCHLOROPHYLLIDE REDUCTASE SUBUNIT N"/>
    <property type="match status" value="1"/>
</dbReference>
<dbReference type="Pfam" id="PF00148">
    <property type="entry name" value="Oxidored_nitro"/>
    <property type="match status" value="1"/>
</dbReference>
<dbReference type="PIRSF" id="PIRSF000162">
    <property type="entry name" value="P_chlorophyll_rd"/>
    <property type="match status" value="1"/>
</dbReference>
<dbReference type="SUPFAM" id="SSF53807">
    <property type="entry name" value="Helical backbone' metal receptor"/>
    <property type="match status" value="1"/>
</dbReference>
<organism>
    <name type="scientific">Pinus contorta</name>
    <name type="common">Shore pine</name>
    <name type="synonym">Lodgepole pine</name>
    <dbReference type="NCBI Taxonomy" id="3339"/>
    <lineage>
        <taxon>Eukaryota</taxon>
        <taxon>Viridiplantae</taxon>
        <taxon>Streptophyta</taxon>
        <taxon>Embryophyta</taxon>
        <taxon>Tracheophyta</taxon>
        <taxon>Spermatophyta</taxon>
        <taxon>Pinopsida</taxon>
        <taxon>Pinidae</taxon>
        <taxon>Conifers I</taxon>
        <taxon>Pinales</taxon>
        <taxon>Pinaceae</taxon>
        <taxon>Pinus</taxon>
        <taxon>Pinus subgen. Pinus</taxon>
    </lineage>
</organism>
<name>CHLN_PINCO</name>
<evidence type="ECO:0000255" key="1">
    <source>
        <dbReference type="HAMAP-Rule" id="MF_00352"/>
    </source>
</evidence>
<comment type="function">
    <text evidence="1">Component of the dark-operative protochlorophyllide reductase (DPOR) that uses Mg-ATP and reduced ferredoxin to reduce ring D of protochlorophyllide (Pchlide) to form chlorophyllide a (Chlide). This reaction is light-independent. The NB-protein (ChlN-ChlB) is the catalytic component of the complex.</text>
</comment>
<comment type="catalytic activity">
    <reaction evidence="1">
        <text>chlorophyllide a + oxidized 2[4Fe-4S]-[ferredoxin] + 2 ADP + 2 phosphate = protochlorophyllide a + reduced 2[4Fe-4S]-[ferredoxin] + 2 ATP + 2 H2O</text>
        <dbReference type="Rhea" id="RHEA:28202"/>
        <dbReference type="Rhea" id="RHEA-COMP:10002"/>
        <dbReference type="Rhea" id="RHEA-COMP:10004"/>
        <dbReference type="ChEBI" id="CHEBI:15377"/>
        <dbReference type="ChEBI" id="CHEBI:30616"/>
        <dbReference type="ChEBI" id="CHEBI:33722"/>
        <dbReference type="ChEBI" id="CHEBI:33723"/>
        <dbReference type="ChEBI" id="CHEBI:43474"/>
        <dbReference type="ChEBI" id="CHEBI:83348"/>
        <dbReference type="ChEBI" id="CHEBI:83350"/>
        <dbReference type="ChEBI" id="CHEBI:456216"/>
        <dbReference type="EC" id="1.3.7.7"/>
    </reaction>
</comment>
<comment type="cofactor">
    <cofactor evidence="1">
        <name>[4Fe-4S] cluster</name>
        <dbReference type="ChEBI" id="CHEBI:49883"/>
    </cofactor>
    <text evidence="1">Binds 1 [4Fe-4S] cluster per heterodimer. The cluster is bound at the heterodimer interface by residues from both subunits.</text>
</comment>
<comment type="pathway">
    <text evidence="1">Porphyrin-containing compound metabolism; chlorophyll biosynthesis (light-independent).</text>
</comment>
<comment type="subunit">
    <text evidence="1">Protochlorophyllide reductase is composed of three subunits; ChlL, ChlN and ChlB. Forms a heterotetramer of two ChlB and two ChlN subunits.</text>
</comment>
<comment type="subcellular location">
    <subcellularLocation>
        <location>Plastid</location>
        <location>Chloroplast</location>
    </subcellularLocation>
</comment>
<comment type="similarity">
    <text evidence="1">Belongs to the BchN/ChlN family.</text>
</comment>
<reference key="1">
    <citation type="journal article" date="1991" name="Plant Mol. Biol.">
        <title>Homologues of the green algal gidA gene and the liverwort frxC gene are present on the chloroplast genomes of conifers.</title>
        <authorList>
            <person name="Lidholm J."/>
            <person name="Gustafsson P."/>
        </authorList>
    </citation>
    <scope>NUCLEOTIDE SEQUENCE [GENOMIC DNA]</scope>
    <source>
        <tissue>Leaf</tissue>
    </source>
</reference>